<organism>
    <name type="scientific">Polypedates leucomystax</name>
    <name type="common">Common tree frog</name>
    <name type="synonym">Hyla leucomystax</name>
    <dbReference type="NCBI Taxonomy" id="68444"/>
    <lineage>
        <taxon>Eukaryota</taxon>
        <taxon>Metazoa</taxon>
        <taxon>Chordata</taxon>
        <taxon>Craniata</taxon>
        <taxon>Vertebrata</taxon>
        <taxon>Euteleostomi</taxon>
        <taxon>Amphibia</taxon>
        <taxon>Batrachia</taxon>
        <taxon>Anura</taxon>
        <taxon>Neobatrachia</taxon>
        <taxon>Ranoidea</taxon>
        <taxon>Rhacophoridae</taxon>
        <taxon>Rhacophorinae</taxon>
        <taxon>Polypedates</taxon>
    </lineage>
</organism>
<feature type="chain" id="PRO_0000332964" description="Ranasmurfin">
    <location>
        <begin position="1"/>
        <end position="113"/>
    </location>
</feature>
<feature type="binding site">
    <location>
        <position position="108"/>
    </location>
    <ligand>
        <name>Zn(2+)</name>
        <dbReference type="ChEBI" id="CHEBI:29105"/>
        <note>ligand shared between dimeric partners</note>
    </ligand>
</feature>
<feature type="binding site">
    <location>
        <position position="112"/>
    </location>
    <ligand>
        <name>Zn(2+)</name>
        <dbReference type="ChEBI" id="CHEBI:29105"/>
        <note>ligand shared between dimeric partners</note>
    </ligand>
</feature>
<feature type="modified residue" description="2',4',5'-topaquinone" evidence="3">
    <location>
        <position position="2"/>
    </location>
</feature>
<feature type="modified residue" description="Aminomalonic acid (Ser); in chain B" evidence="3">
    <location>
        <position position="9"/>
    </location>
</feature>
<feature type="modified residue" description="Cysteine sulfenic acid (-SOH); in chain B" evidence="2 3">
    <location>
        <position position="65"/>
    </location>
</feature>
<feature type="modified residue" description="2',4',5'-topaquinone" evidence="3">
    <location>
        <position position="108"/>
    </location>
</feature>
<feature type="disulfide bond" evidence="3">
    <location>
        <begin position="4"/>
        <end position="62"/>
    </location>
</feature>
<feature type="disulfide bond" description="In chain A" evidence="3">
    <location>
        <begin position="17"/>
        <end position="65"/>
    </location>
</feature>
<feature type="disulfide bond" evidence="3">
    <location>
        <begin position="37"/>
        <end position="101"/>
    </location>
</feature>
<feature type="cross-link" description="Lysine tyrosylquinone (Tyr-Lys)" evidence="3">
    <location>
        <begin position="2"/>
        <end position="31"/>
    </location>
</feature>
<feature type="cross-link" description="S-cysteinyl 3-(oxidosulfanyl)alanine (Cys-Cys); in chain B">
    <location>
        <begin position="17"/>
        <end position="65"/>
    </location>
</feature>
<feature type="cross-link" description="Lysine tyrosylquinone (Lys-Tyr)" evidence="3">
    <location>
        <begin position="30"/>
        <end position="108"/>
    </location>
</feature>
<feature type="cross-link" description="5'-tyrosyl-5'-aminotyrosine (Tyr-Tyr) (interchain with Y-108)">
    <location>
        <position position="108"/>
    </location>
</feature>
<feature type="helix" evidence="5">
    <location>
        <begin position="17"/>
        <end position="24"/>
    </location>
</feature>
<feature type="helix" evidence="5">
    <location>
        <begin position="26"/>
        <end position="40"/>
    </location>
</feature>
<feature type="helix" evidence="5">
    <location>
        <begin position="42"/>
        <end position="44"/>
    </location>
</feature>
<feature type="helix" evidence="5">
    <location>
        <begin position="46"/>
        <end position="63"/>
    </location>
</feature>
<feature type="helix" evidence="5">
    <location>
        <begin position="76"/>
        <end position="78"/>
    </location>
</feature>
<feature type="helix" evidence="5">
    <location>
        <begin position="79"/>
        <end position="90"/>
    </location>
</feature>
<feature type="helix" evidence="5">
    <location>
        <begin position="94"/>
        <end position="96"/>
    </location>
</feature>
<feature type="helix" evidence="5">
    <location>
        <begin position="97"/>
        <end position="107"/>
    </location>
</feature>
<evidence type="ECO:0000269" key="1">
    <source>
    </source>
</evidence>
<evidence type="ECO:0000269" key="2">
    <source>
    </source>
</evidence>
<evidence type="ECO:0000269" key="3">
    <source ref="1"/>
</evidence>
<evidence type="ECO:0000305" key="4"/>
<evidence type="ECO:0007829" key="5">
    <source>
        <dbReference type="PDB" id="2VH3"/>
    </source>
</evidence>
<comment type="cofactor">
    <cofactor evidence="1 3">
        <name>Zn(2+)</name>
        <dbReference type="ChEBI" id="CHEBI:29105"/>
    </cofactor>
    <text evidence="1 3">Binds 1 zinc ion per dimer.</text>
</comment>
<comment type="subunit">
    <text evidence="1 2 3">Homodimer. The two chains, designated A and B, differ in their modifications, but not, it is thought, in their sequence.</text>
</comment>
<comment type="subcellular location">
    <subcellularLocation>
        <location>Secreted</location>
    </subcellularLocation>
</comment>
<comment type="tissue specificity">
    <text evidence="3">Foam nest.</text>
</comment>
<comment type="miscellaneous">
    <text evidence="3">After isolation, the blue protein turns green on exposure to air and sunlight.</text>
</comment>
<comment type="online information" name="Protein Spotlight">
    <link uri="https://www.proteinspotlight.org/back_issues/103"/>
    <text>About the blues - Issue 103 of March 2009</text>
</comment>
<accession>P85511</accession>
<proteinExistence type="evidence at protein level"/>
<dbReference type="PDB" id="2VH3">
    <property type="method" value="X-ray"/>
    <property type="resolution" value="1.16 A"/>
    <property type="chains" value="A/B=1-113"/>
</dbReference>
<dbReference type="PDBsum" id="2VH3"/>
<dbReference type="SMR" id="P85511"/>
<dbReference type="EvolutionaryTrace" id="P85511"/>
<dbReference type="GO" id="GO:0005576">
    <property type="term" value="C:extracellular region"/>
    <property type="evidence" value="ECO:0007669"/>
    <property type="project" value="UniProtKB-SubCell"/>
</dbReference>
<dbReference type="GO" id="GO:0046872">
    <property type="term" value="F:metal ion binding"/>
    <property type="evidence" value="ECO:0007669"/>
    <property type="project" value="UniProtKB-KW"/>
</dbReference>
<dbReference type="Gene3D" id="1.20.120.1410">
    <property type="match status" value="1"/>
</dbReference>
<dbReference type="InterPro" id="IPR053770">
    <property type="entry name" value="MB_blue_pigment_sf"/>
</dbReference>
<reference evidence="4" key="1">
    <citation type="submission" date="2008-02" db="UniProtKB">
        <title>Unusual chromophores and crosslinks in ranasmurfin - a blue protein from the foam nests of a tropical frog.</title>
        <authorList>
            <person name="Muse O."/>
            <person name="Ching R.T.Y."/>
            <person name="Carter L.G."/>
            <person name="Johnson K.A."/>
            <person name="Liu H."/>
            <person name="Mcmahon S.A."/>
            <person name="White M.F."/>
            <person name="Bloch C. Jr."/>
            <person name="Botting C.H."/>
            <person name="Walsh M.A."/>
            <person name="Latiff A.A."/>
            <person name="Kennedy M.W."/>
            <person name="Cooper A."/>
            <person name="Naismith J.H."/>
        </authorList>
    </citation>
    <scope>PROTEIN SEQUENCE</scope>
    <scope>SUBUNIT</scope>
    <scope>TISSUE SPECIFICITY</scope>
    <scope>ZINC BINDING</scope>
    <scope>AMINOMALONIC ACID FORMATION AT SER-9</scope>
    <scope>DISULFIDE BONDS</scope>
    <scope>CROSS-LINK FORMATION</scope>
    <source>
        <tissue evidence="3">Foam nest</tissue>
    </source>
</reference>
<reference evidence="4" key="2">
    <citation type="journal article" date="2006" name="Acta Crystallogr. F">
        <title>Crystallization of ranasmurfin, a blue-coloured protein from Polypedates leucomystax.</title>
        <authorList>
            <person name="McMahon S.A."/>
            <person name="Walsh M.A."/>
            <person name="Ching R.T.Y."/>
            <person name="Carter L.G."/>
            <person name="Dorward M."/>
            <person name="Johnson K.A."/>
            <person name="Liu H."/>
            <person name="Oke M."/>
            <person name="Bloch C. Jr."/>
            <person name="Kennedy M.W."/>
            <person name="Latiff A.A."/>
            <person name="Cooper A."/>
            <person name="Taylor G.L."/>
            <person name="White M.F."/>
            <person name="Naismith J.H."/>
        </authorList>
    </citation>
    <scope>SUBUNIT</scope>
    <scope>ZINC-BINDING</scope>
    <scope>CRYSTALLIZATION</scope>
</reference>
<reference key="3">
    <citation type="journal article" date="2008" name="Angew. Chem. Int. Ed.">
        <title>Unusual chromophore and cross-links in ranasmurfin: a blue protein from the foam nests of a tropical frog.</title>
        <authorList>
            <person name="Oke M."/>
            <person name="Ching R.T.Y."/>
            <person name="Carter L.G."/>
            <person name="Johnson K.A."/>
            <person name="Liu H."/>
            <person name="McMahon S.A."/>
            <person name="White M.F."/>
            <person name="Bloch C. Jr."/>
            <person name="Botting C.H."/>
            <person name="Walsh M.A."/>
            <person name="Latiff A.A."/>
            <person name="Kennedy M.W."/>
            <person name="Cooper A."/>
            <person name="Naismith J.H."/>
        </authorList>
    </citation>
    <scope>X-RAY CRYSTALLOGRAPHY (1.16 ANGSTROMS) IN COMPLEX WITH ZINC IONS</scope>
    <scope>SUBUNIT</scope>
    <scope>DISULFIDE BONDS</scope>
    <scope>OXIDATION AT CYS-65</scope>
    <scope>CROSS-LINKS</scope>
    <scope>IDENTIFICATION BY MASS SPECTROMETRY</scope>
</reference>
<protein>
    <recommendedName>
        <fullName>Ranasmurfin</fullName>
    </recommendedName>
    <alternativeName>
        <fullName>RSF-1</fullName>
    </alternativeName>
</protein>
<name>RANSM_POLLE</name>
<keyword id="KW-0002">3D-structure</keyword>
<keyword id="KW-0903">Direct protein sequencing</keyword>
<keyword id="KW-1015">Disulfide bond</keyword>
<keyword id="KW-0886">LTQ</keyword>
<keyword id="KW-0479">Metal-binding</keyword>
<keyword id="KW-0558">Oxidation</keyword>
<keyword id="KW-0964">Secreted</keyword>
<keyword id="KW-0801">TPQ</keyword>
<keyword id="KW-0862">Zinc</keyword>
<sequence>AYACSFPPSEIPGSKECLAEALQKHQGFKKKSYALICAYLNYKEDAENYERAAEDFDSAVKCTGCKEGVDLHEGNPELIEEGFEKFLASLKIDRKALGSLCTLFQKLYAIPHN</sequence>